<accession>C5A054</accession>
<organism>
    <name type="scientific">Escherichia coli (strain K12 / MC4100 / BW2952)</name>
    <dbReference type="NCBI Taxonomy" id="595496"/>
    <lineage>
        <taxon>Bacteria</taxon>
        <taxon>Pseudomonadati</taxon>
        <taxon>Pseudomonadota</taxon>
        <taxon>Gammaproteobacteria</taxon>
        <taxon>Enterobacterales</taxon>
        <taxon>Enterobacteriaceae</taxon>
        <taxon>Escherichia</taxon>
    </lineage>
</organism>
<dbReference type="EMBL" id="CP001396">
    <property type="protein sequence ID" value="ACR64581.1"/>
    <property type="molecule type" value="Genomic_DNA"/>
</dbReference>
<dbReference type="RefSeq" id="WP_000920762.1">
    <property type="nucleotide sequence ID" value="NC_012759.1"/>
</dbReference>
<dbReference type="KEGG" id="ebw:BWG_3556"/>
<dbReference type="HOGENOM" id="CLU_032288_0_0_6"/>
<dbReference type="GO" id="GO:0005886">
    <property type="term" value="C:plasma membrane"/>
    <property type="evidence" value="ECO:0007669"/>
    <property type="project" value="UniProtKB-SubCell"/>
</dbReference>
<dbReference type="HAMAP" id="MF_00672">
    <property type="entry name" value="UPF0761"/>
    <property type="match status" value="1"/>
</dbReference>
<dbReference type="InterPro" id="IPR023679">
    <property type="entry name" value="UPF0761_bac"/>
</dbReference>
<dbReference type="InterPro" id="IPR017039">
    <property type="entry name" value="Virul_fac_BrkB"/>
</dbReference>
<dbReference type="NCBIfam" id="NF002457">
    <property type="entry name" value="PRK01637.1"/>
    <property type="match status" value="1"/>
</dbReference>
<dbReference type="NCBIfam" id="TIGR00765">
    <property type="entry name" value="yihY_not_rbn"/>
    <property type="match status" value="1"/>
</dbReference>
<dbReference type="PANTHER" id="PTHR30213">
    <property type="entry name" value="INNER MEMBRANE PROTEIN YHJD"/>
    <property type="match status" value="1"/>
</dbReference>
<dbReference type="PANTHER" id="PTHR30213:SF0">
    <property type="entry name" value="UPF0761 MEMBRANE PROTEIN YIHY"/>
    <property type="match status" value="1"/>
</dbReference>
<dbReference type="Pfam" id="PF03631">
    <property type="entry name" value="Virul_fac_BrkB"/>
    <property type="match status" value="1"/>
</dbReference>
<dbReference type="PIRSF" id="PIRSF035875">
    <property type="entry name" value="RNase_BN"/>
    <property type="match status" value="1"/>
</dbReference>
<protein>
    <recommendedName>
        <fullName evidence="1">UPF0761 membrane protein YihY</fullName>
    </recommendedName>
</protein>
<proteinExistence type="inferred from homology"/>
<comment type="subcellular location">
    <subcellularLocation>
        <location evidence="1">Cell inner membrane</location>
        <topology evidence="1">Multi-pass membrane protein</topology>
    </subcellularLocation>
</comment>
<comment type="similarity">
    <text evidence="1">Belongs to the UPF0761 family.</text>
</comment>
<reference key="1">
    <citation type="journal article" date="2009" name="J. Bacteriol.">
        <title>Genomic sequencing reveals regulatory mutations and recombinational events in the widely used MC4100 lineage of Escherichia coli K-12.</title>
        <authorList>
            <person name="Ferenci T."/>
            <person name="Zhou Z."/>
            <person name="Betteridge T."/>
            <person name="Ren Y."/>
            <person name="Liu Y."/>
            <person name="Feng L."/>
            <person name="Reeves P.R."/>
            <person name="Wang L."/>
        </authorList>
    </citation>
    <scope>NUCLEOTIDE SEQUENCE [LARGE SCALE GENOMIC DNA]</scope>
    <source>
        <strain>K12 / MC4100 / BW2952</strain>
    </source>
</reference>
<keyword id="KW-0997">Cell inner membrane</keyword>
<keyword id="KW-1003">Cell membrane</keyword>
<keyword id="KW-0472">Membrane</keyword>
<keyword id="KW-0812">Transmembrane</keyword>
<keyword id="KW-1133">Transmembrane helix</keyword>
<name>YIHY_ECOBW</name>
<feature type="chain" id="PRO_1000212513" description="UPF0761 membrane protein YihY">
    <location>
        <begin position="1"/>
        <end position="290"/>
    </location>
</feature>
<feature type="transmembrane region" description="Helical" evidence="1">
    <location>
        <begin position="44"/>
        <end position="64"/>
    </location>
</feature>
<feature type="transmembrane region" description="Helical" evidence="1">
    <location>
        <begin position="104"/>
        <end position="124"/>
    </location>
</feature>
<feature type="transmembrane region" description="Helical" evidence="1">
    <location>
        <begin position="140"/>
        <end position="160"/>
    </location>
</feature>
<feature type="transmembrane region" description="Helical" evidence="1">
    <location>
        <begin position="183"/>
        <end position="203"/>
    </location>
</feature>
<feature type="transmembrane region" description="Helical" evidence="1">
    <location>
        <begin position="210"/>
        <end position="230"/>
    </location>
</feature>
<feature type="transmembrane region" description="Helical" evidence="1">
    <location>
        <begin position="244"/>
        <end position="264"/>
    </location>
</feature>
<sequence length="290" mass="32839">MLKTIQDKARHRTRPLWAWLKLLWQRIDEDNMTTLAGNLAYVSLLSLVPLVAVVFALFAAFPMFSDVSIQLRHFIFANFLPATGDVIQRYIEQFVANSNKMTAVGACGLIVTALLLMYSIDSALNTIWRSKRARPKIYSFAVYWMILTLGPLLAGASLAISSYLLSLRWASDLNTVIDNVLRIFPLLLSWISFWLLYSIVPTIRVPNRDAIVGAFVAALLFEAGKKGFALYITMFPSYQLIYGVLAVIPILFVWVYWTWCIVLLGAEITVTLGEYRKLKQAAEQEEDDEP</sequence>
<evidence type="ECO:0000255" key="1">
    <source>
        <dbReference type="HAMAP-Rule" id="MF_00672"/>
    </source>
</evidence>
<gene>
    <name evidence="1" type="primary">yihY</name>
    <name type="ordered locus">BWG_3556</name>
</gene>